<gene>
    <name type="primary">ipdC</name>
</gene>
<keyword id="KW-0002">3D-structure</keyword>
<keyword id="KW-0210">Decarboxylase</keyword>
<keyword id="KW-0456">Lyase</keyword>
<keyword id="KW-0460">Magnesium</keyword>
<keyword id="KW-0479">Metal-binding</keyword>
<keyword id="KW-0786">Thiamine pyrophosphate</keyword>
<accession>P23234</accession>
<sequence length="552" mass="60024">MRTPYCVADYLLDRLTDCGADHLFGVPGDYNLQFLDHVIDSPDICWVGCANELNASYAADGYARCKGFAALLTTFGVGELSAMNGIAGSYAEHVPVLHIVGAPGTAAQQRGELLHHTLGDGEFRHFYHMSEPITVAQAVLTEQNACYEIDRVLTTMLRERRPGYLMLPADVAKKAATPPVNALTHKQAHADSACLKAFRDAAENKLAMSKRTALLADFLVLRHGLKHALQKWVKEVPMAHATMLMGKGIFDERQAGFYGTYSGSASTGAVKEAIEGADTVLCVGTRFTDTLTAGFTHQLTPAQTIEVQPHAARVGDVWFTGIPMNQAIETLVELCKQHVHAGLMSSSSGAIPFPQPDGSLTQENFWRTLQTFIRPGDIILADQGTSAFGAIDLRLPADVNFIVQPLWGSIGYTLAAAFGAQTACPNRRVIVLTGDGAAQLTIQELGSMLRDKQHPIILVLNNEGYTVERAIHGAEQRYNDIALWNWTHIPQALSLDPQSECWRVSEAEQLADVLEKVAHHERLSLIEVMLPKADIPPLLGALTKALEACNNA</sequence>
<organism>
    <name type="scientific">Enterobacter cloacae</name>
    <dbReference type="NCBI Taxonomy" id="550"/>
    <lineage>
        <taxon>Bacteria</taxon>
        <taxon>Pseudomonadati</taxon>
        <taxon>Pseudomonadota</taxon>
        <taxon>Gammaproteobacteria</taxon>
        <taxon>Enterobacterales</taxon>
        <taxon>Enterobacteriaceae</taxon>
        <taxon>Enterobacter</taxon>
        <taxon>Enterobacter cloacae complex</taxon>
    </lineage>
</organism>
<protein>
    <recommendedName>
        <fullName>Indole-3-pyruvate decarboxylase</fullName>
        <shortName>Indolepyruvate decarboxylase</shortName>
        <ecNumber>4.1.1.74</ecNumber>
    </recommendedName>
</protein>
<name>DCIP_ENTCL</name>
<feature type="chain" id="PRO_0000090822" description="Indole-3-pyruvate decarboxylase">
    <location>
        <begin position="1"/>
        <end position="552"/>
    </location>
</feature>
<feature type="region of interest" description="Thiamine pyrophosphate binding">
    <location>
        <begin position="385"/>
        <end position="466"/>
    </location>
</feature>
<feature type="binding site" evidence="1">
    <location>
        <position position="52"/>
    </location>
    <ligand>
        <name>thiamine diphosphate</name>
        <dbReference type="ChEBI" id="CHEBI:58937"/>
    </ligand>
</feature>
<feature type="binding site" evidence="1">
    <location>
        <position position="435"/>
    </location>
    <ligand>
        <name>Mg(2+)</name>
        <dbReference type="ChEBI" id="CHEBI:18420"/>
    </ligand>
</feature>
<feature type="binding site" evidence="1">
    <location>
        <position position="462"/>
    </location>
    <ligand>
        <name>Mg(2+)</name>
        <dbReference type="ChEBI" id="CHEBI:18420"/>
    </ligand>
</feature>
<feature type="helix" evidence="3">
    <location>
        <begin position="7"/>
        <end position="17"/>
    </location>
</feature>
<feature type="strand" evidence="3">
    <location>
        <begin position="22"/>
        <end position="25"/>
    </location>
</feature>
<feature type="helix" evidence="3">
    <location>
        <begin position="29"/>
        <end position="31"/>
    </location>
</feature>
<feature type="helix" evidence="3">
    <location>
        <begin position="32"/>
        <end position="40"/>
    </location>
</feature>
<feature type="strand" evidence="3">
    <location>
        <begin position="45"/>
        <end position="48"/>
    </location>
</feature>
<feature type="helix" evidence="3">
    <location>
        <begin position="52"/>
        <end position="66"/>
    </location>
</feature>
<feature type="strand" evidence="3">
    <location>
        <begin position="69"/>
        <end position="74"/>
    </location>
</feature>
<feature type="helix" evidence="3">
    <location>
        <begin position="77"/>
        <end position="81"/>
    </location>
</feature>
<feature type="helix" evidence="3">
    <location>
        <begin position="83"/>
        <end position="91"/>
    </location>
</feature>
<feature type="strand" evidence="3">
    <location>
        <begin position="96"/>
        <end position="102"/>
    </location>
</feature>
<feature type="helix" evidence="3">
    <location>
        <begin position="105"/>
        <end position="110"/>
    </location>
</feature>
<feature type="strand" evidence="3">
    <location>
        <begin position="119"/>
        <end position="121"/>
    </location>
</feature>
<feature type="helix" evidence="3">
    <location>
        <begin position="125"/>
        <end position="129"/>
    </location>
</feature>
<feature type="helix" evidence="3">
    <location>
        <begin position="131"/>
        <end position="133"/>
    </location>
</feature>
<feature type="strand" evidence="3">
    <location>
        <begin position="135"/>
        <end position="139"/>
    </location>
</feature>
<feature type="turn" evidence="3">
    <location>
        <begin position="142"/>
        <end position="144"/>
    </location>
</feature>
<feature type="helix" evidence="3">
    <location>
        <begin position="145"/>
        <end position="159"/>
    </location>
</feature>
<feature type="strand" evidence="3">
    <location>
        <begin position="163"/>
        <end position="168"/>
    </location>
</feature>
<feature type="helix" evidence="3">
    <location>
        <begin position="169"/>
        <end position="173"/>
    </location>
</feature>
<feature type="helix" evidence="3">
    <location>
        <begin position="192"/>
        <end position="207"/>
    </location>
</feature>
<feature type="strand" evidence="3">
    <location>
        <begin position="212"/>
        <end position="216"/>
    </location>
</feature>
<feature type="helix" evidence="3">
    <location>
        <begin position="218"/>
        <end position="222"/>
    </location>
</feature>
<feature type="helix" evidence="3">
    <location>
        <begin position="226"/>
        <end position="235"/>
    </location>
</feature>
<feature type="strand" evidence="3">
    <location>
        <begin position="239"/>
        <end position="242"/>
    </location>
</feature>
<feature type="helix" evidence="3">
    <location>
        <begin position="244"/>
        <end position="246"/>
    </location>
</feature>
<feature type="helix" evidence="3">
    <location>
        <begin position="263"/>
        <end position="265"/>
    </location>
</feature>
<feature type="helix" evidence="3">
    <location>
        <begin position="268"/>
        <end position="275"/>
    </location>
</feature>
<feature type="strand" evidence="3">
    <location>
        <begin position="277"/>
        <end position="284"/>
    </location>
</feature>
<feature type="turn" evidence="3">
    <location>
        <begin position="289"/>
        <end position="295"/>
    </location>
</feature>
<feature type="turn" evidence="3">
    <location>
        <begin position="301"/>
        <end position="303"/>
    </location>
</feature>
<feature type="strand" evidence="3">
    <location>
        <begin position="304"/>
        <end position="307"/>
    </location>
</feature>
<feature type="strand" evidence="3">
    <location>
        <begin position="309"/>
        <end position="314"/>
    </location>
</feature>
<feature type="strand" evidence="3">
    <location>
        <begin position="317"/>
        <end position="321"/>
    </location>
</feature>
<feature type="helix" evidence="3">
    <location>
        <begin position="324"/>
        <end position="336"/>
    </location>
</feature>
<feature type="helix" evidence="3">
    <location>
        <begin position="362"/>
        <end position="372"/>
    </location>
</feature>
<feature type="strand" evidence="3">
    <location>
        <begin position="378"/>
        <end position="381"/>
    </location>
</feature>
<feature type="helix" evidence="3">
    <location>
        <begin position="385"/>
        <end position="390"/>
    </location>
</feature>
<feature type="strand" evidence="3">
    <location>
        <begin position="400"/>
        <end position="402"/>
    </location>
</feature>
<feature type="turn" evidence="3">
    <location>
        <begin position="405"/>
        <end position="407"/>
    </location>
</feature>
<feature type="helix" evidence="3">
    <location>
        <begin position="412"/>
        <end position="423"/>
    </location>
</feature>
<feature type="strand" evidence="3">
    <location>
        <begin position="429"/>
        <end position="434"/>
    </location>
</feature>
<feature type="helix" evidence="3">
    <location>
        <begin position="435"/>
        <end position="441"/>
    </location>
</feature>
<feature type="helix" evidence="3">
    <location>
        <begin position="444"/>
        <end position="450"/>
    </location>
</feature>
<feature type="strand" evidence="3">
    <location>
        <begin position="456"/>
        <end position="464"/>
    </location>
</feature>
<feature type="helix" evidence="3">
    <location>
        <begin position="466"/>
        <end position="471"/>
    </location>
</feature>
<feature type="helix" evidence="3">
    <location>
        <begin position="477"/>
        <end position="479"/>
    </location>
</feature>
<feature type="helix" evidence="3">
    <location>
        <begin position="486"/>
        <end position="488"/>
    </location>
</feature>
<feature type="turn" evidence="3">
    <location>
        <begin position="490"/>
        <end position="492"/>
    </location>
</feature>
<feature type="strand" evidence="3">
    <location>
        <begin position="499"/>
        <end position="504"/>
    </location>
</feature>
<feature type="helix" evidence="3">
    <location>
        <begin position="507"/>
        <end position="517"/>
    </location>
</feature>
<feature type="strand" evidence="3">
    <location>
        <begin position="521"/>
        <end position="529"/>
    </location>
</feature>
<feature type="helix" evidence="3">
    <location>
        <begin position="537"/>
        <end position="550"/>
    </location>
</feature>
<dbReference type="EC" id="4.1.1.74"/>
<dbReference type="EMBL" id="D90214">
    <property type="protein sequence ID" value="BAA14242.1"/>
    <property type="molecule type" value="Genomic_DNA"/>
</dbReference>
<dbReference type="PIR" id="S16013">
    <property type="entry name" value="S16013"/>
</dbReference>
<dbReference type="PDB" id="1OVM">
    <property type="method" value="X-ray"/>
    <property type="resolution" value="2.65 A"/>
    <property type="chains" value="A/B/C/D=1-552"/>
</dbReference>
<dbReference type="PDBsum" id="1OVM"/>
<dbReference type="SMR" id="P23234"/>
<dbReference type="DrugBank" id="DB01987">
    <property type="generic name" value="Cocarboxylase"/>
</dbReference>
<dbReference type="eggNOG" id="COG3961">
    <property type="taxonomic scope" value="Bacteria"/>
</dbReference>
<dbReference type="BioCyc" id="MetaCyc:MONOMER-7781"/>
<dbReference type="BRENDA" id="4.1.1.74">
    <property type="organism ID" value="155"/>
</dbReference>
<dbReference type="SABIO-RK" id="P23234"/>
<dbReference type="UniPathway" id="UPA00151"/>
<dbReference type="EvolutionaryTrace" id="P23234"/>
<dbReference type="GO" id="GO:0005829">
    <property type="term" value="C:cytosol"/>
    <property type="evidence" value="ECO:0007669"/>
    <property type="project" value="TreeGrafter"/>
</dbReference>
<dbReference type="GO" id="GO:0047434">
    <property type="term" value="F:indolepyruvate decarboxylase activity"/>
    <property type="evidence" value="ECO:0007669"/>
    <property type="project" value="UniProtKB-EC"/>
</dbReference>
<dbReference type="GO" id="GO:0000287">
    <property type="term" value="F:magnesium ion binding"/>
    <property type="evidence" value="ECO:0007669"/>
    <property type="project" value="InterPro"/>
</dbReference>
<dbReference type="GO" id="GO:0004737">
    <property type="term" value="F:pyruvate decarboxylase activity"/>
    <property type="evidence" value="ECO:0007669"/>
    <property type="project" value="TreeGrafter"/>
</dbReference>
<dbReference type="GO" id="GO:0030976">
    <property type="term" value="F:thiamine pyrophosphate binding"/>
    <property type="evidence" value="ECO:0007669"/>
    <property type="project" value="InterPro"/>
</dbReference>
<dbReference type="GO" id="GO:0000949">
    <property type="term" value="P:aromatic amino acid family catabolic process to alcohol via Ehrlich pathway"/>
    <property type="evidence" value="ECO:0007669"/>
    <property type="project" value="TreeGrafter"/>
</dbReference>
<dbReference type="GO" id="GO:0009851">
    <property type="term" value="P:auxin biosynthetic process"/>
    <property type="evidence" value="ECO:0007669"/>
    <property type="project" value="UniProtKB-UniPathway"/>
</dbReference>
<dbReference type="CDD" id="cd02005">
    <property type="entry name" value="TPP_PDC_IPDC"/>
    <property type="match status" value="1"/>
</dbReference>
<dbReference type="CDD" id="cd07038">
    <property type="entry name" value="TPP_PYR_PDC_IPDC_like"/>
    <property type="match status" value="1"/>
</dbReference>
<dbReference type="FunFam" id="3.40.50.970:FF:000019">
    <property type="entry name" value="Pyruvate decarboxylase isozyme"/>
    <property type="match status" value="1"/>
</dbReference>
<dbReference type="FunFam" id="3.40.50.970:FF:000024">
    <property type="entry name" value="Pyruvate decarboxylase isozyme"/>
    <property type="match status" value="1"/>
</dbReference>
<dbReference type="Gene3D" id="3.40.50.970">
    <property type="match status" value="2"/>
</dbReference>
<dbReference type="Gene3D" id="3.40.50.1220">
    <property type="entry name" value="TPP-binding domain"/>
    <property type="match status" value="1"/>
</dbReference>
<dbReference type="InterPro" id="IPR029035">
    <property type="entry name" value="DHS-like_NAD/FAD-binding_dom"/>
</dbReference>
<dbReference type="InterPro" id="IPR017764">
    <property type="entry name" value="IPDC_Enterobacteriaceae"/>
</dbReference>
<dbReference type="InterPro" id="IPR012110">
    <property type="entry name" value="PDC/IPDC-like"/>
</dbReference>
<dbReference type="InterPro" id="IPR029061">
    <property type="entry name" value="THDP-binding"/>
</dbReference>
<dbReference type="InterPro" id="IPR012000">
    <property type="entry name" value="Thiamin_PyroP_enz_cen_dom"/>
</dbReference>
<dbReference type="InterPro" id="IPR012001">
    <property type="entry name" value="Thiamin_PyroP_enz_TPP-bd_dom"/>
</dbReference>
<dbReference type="InterPro" id="IPR000399">
    <property type="entry name" value="TPP-bd_CS"/>
</dbReference>
<dbReference type="InterPro" id="IPR011766">
    <property type="entry name" value="TPP_enzyme_TPP-bd"/>
</dbReference>
<dbReference type="InterPro" id="IPR047214">
    <property type="entry name" value="TPP_PDC_IPDC"/>
</dbReference>
<dbReference type="InterPro" id="IPR047213">
    <property type="entry name" value="TPP_PYR_PDC_IPDC-like"/>
</dbReference>
<dbReference type="NCBIfam" id="TIGR03393">
    <property type="entry name" value="indolpyr_decarb"/>
    <property type="match status" value="1"/>
</dbReference>
<dbReference type="PANTHER" id="PTHR43452">
    <property type="entry name" value="PYRUVATE DECARBOXYLASE"/>
    <property type="match status" value="1"/>
</dbReference>
<dbReference type="PANTHER" id="PTHR43452:SF30">
    <property type="entry name" value="PYRUVATE DECARBOXYLASE ISOZYME 1-RELATED"/>
    <property type="match status" value="1"/>
</dbReference>
<dbReference type="Pfam" id="PF02775">
    <property type="entry name" value="TPP_enzyme_C"/>
    <property type="match status" value="1"/>
</dbReference>
<dbReference type="Pfam" id="PF00205">
    <property type="entry name" value="TPP_enzyme_M"/>
    <property type="match status" value="1"/>
</dbReference>
<dbReference type="Pfam" id="PF02776">
    <property type="entry name" value="TPP_enzyme_N"/>
    <property type="match status" value="1"/>
</dbReference>
<dbReference type="PIRSF" id="PIRSF036565">
    <property type="entry name" value="Pyruvt_ip_decrb"/>
    <property type="match status" value="1"/>
</dbReference>
<dbReference type="SUPFAM" id="SSF52467">
    <property type="entry name" value="DHS-like NAD/FAD-binding domain"/>
    <property type="match status" value="1"/>
</dbReference>
<dbReference type="SUPFAM" id="SSF52518">
    <property type="entry name" value="Thiamin diphosphate-binding fold (THDP-binding)"/>
    <property type="match status" value="2"/>
</dbReference>
<dbReference type="PROSITE" id="PS00187">
    <property type="entry name" value="TPP_ENZYMES"/>
    <property type="match status" value="1"/>
</dbReference>
<evidence type="ECO:0000269" key="1">
    <source>
    </source>
</evidence>
<evidence type="ECO:0000305" key="2"/>
<evidence type="ECO:0007829" key="3">
    <source>
        <dbReference type="PDB" id="1OVM"/>
    </source>
</evidence>
<comment type="catalytic activity">
    <reaction>
        <text>indole-3-pyruvate + H(+) = indole-3-acetaldehyde + CO2</text>
        <dbReference type="Rhea" id="RHEA:18017"/>
        <dbReference type="ChEBI" id="CHEBI:15378"/>
        <dbReference type="ChEBI" id="CHEBI:16526"/>
        <dbReference type="ChEBI" id="CHEBI:17640"/>
        <dbReference type="ChEBI" id="CHEBI:18086"/>
        <dbReference type="EC" id="4.1.1.74"/>
    </reaction>
</comment>
<comment type="cofactor">
    <cofactor>
        <name>a metal cation</name>
        <dbReference type="ChEBI" id="CHEBI:25213"/>
    </cofactor>
    <text>Binds 1 metal ion per subunit.</text>
</comment>
<comment type="cofactor">
    <cofactor>
        <name>thiamine diphosphate</name>
        <dbReference type="ChEBI" id="CHEBI:58937"/>
    </cofactor>
    <text>Binds 1 thiamine pyrophosphate per subunit.</text>
</comment>
<comment type="pathway">
    <text>Plant hormone metabolism; auxin biosynthesis.</text>
</comment>
<comment type="subunit">
    <text evidence="1">Homotetramer.</text>
</comment>
<comment type="similarity">
    <text evidence="2">Belongs to the TPP enzyme family.</text>
</comment>
<proteinExistence type="evidence at protein level"/>
<reference key="1">
    <citation type="journal article" date="1991" name="Mol. Gen. Genet.">
        <title>Molecular cloning of the gene for indolepyruvate decarboxylase from Enterobacter cloacae.</title>
        <authorList>
            <person name="Koga J."/>
            <person name="Adachi T."/>
            <person name="Hidaka H."/>
        </authorList>
    </citation>
    <scope>NUCLEOTIDE SEQUENCE [GENOMIC DNA]</scope>
    <source>
        <strain>FERM BP-1529</strain>
    </source>
</reference>
<reference key="2">
    <citation type="journal article" date="2003" name="Eur. J. Biochem.">
        <title>Crystal structure of thiamindiphosphate-dependent indolepyruvate decarboxylase from Enterobacter cloacae, an enzyme involved in the biosynthesis of the plant hormone indole-3-acetic acid.</title>
        <authorList>
            <person name="Schuetz A."/>
            <person name="Sandalova T."/>
            <person name="Ricagno S."/>
            <person name="Huebner G."/>
            <person name="Koenig S."/>
            <person name="Schneider G."/>
        </authorList>
    </citation>
    <scope>X-RAY CRYSTALLOGRAPHY (2.65 ANGSTROMS) IN COMPLEX WITH THIAMINE PYROPHOSPHATE AND MAGNESIUM</scope>
    <scope>HOMOTETRAMERIZATION</scope>
</reference>